<proteinExistence type="evidence at protein level"/>
<accession>P66540</accession>
<accession>Q9JRG7</accession>
<protein>
    <recommendedName>
        <fullName evidence="1">Small ribosomal subunit protein uS2</fullName>
    </recommendedName>
    <alternativeName>
        <fullName evidence="2">30S ribosomal protein S2</fullName>
    </alternativeName>
</protein>
<evidence type="ECO:0000255" key="1">
    <source>
        <dbReference type="HAMAP-Rule" id="MF_00291"/>
    </source>
</evidence>
<evidence type="ECO:0000305" key="2"/>
<feature type="chain" id="PRO_0000134205" description="Small ribosomal subunit protein uS2">
    <location>
        <begin position="1"/>
        <end position="242"/>
    </location>
</feature>
<reference key="1">
    <citation type="journal article" date="2000" name="Science">
        <title>Complete genome sequence of Neisseria meningitidis serogroup B strain MC58.</title>
        <authorList>
            <person name="Tettelin H."/>
            <person name="Saunders N.J."/>
            <person name="Heidelberg J.F."/>
            <person name="Jeffries A.C."/>
            <person name="Nelson K.E."/>
            <person name="Eisen J.A."/>
            <person name="Ketchum K.A."/>
            <person name="Hood D.W."/>
            <person name="Peden J.F."/>
            <person name="Dodson R.J."/>
            <person name="Nelson W.C."/>
            <person name="Gwinn M.L."/>
            <person name="DeBoy R.T."/>
            <person name="Peterson J.D."/>
            <person name="Hickey E.K."/>
            <person name="Haft D.H."/>
            <person name="Salzberg S.L."/>
            <person name="White O."/>
            <person name="Fleischmann R.D."/>
            <person name="Dougherty B.A."/>
            <person name="Mason T.M."/>
            <person name="Ciecko A."/>
            <person name="Parksey D.S."/>
            <person name="Blair E."/>
            <person name="Cittone H."/>
            <person name="Clark E.B."/>
            <person name="Cotton M.D."/>
            <person name="Utterback T.R."/>
            <person name="Khouri H.M."/>
            <person name="Qin H."/>
            <person name="Vamathevan J.J."/>
            <person name="Gill J."/>
            <person name="Scarlato V."/>
            <person name="Masignani V."/>
            <person name="Pizza M."/>
            <person name="Grandi G."/>
            <person name="Sun L."/>
            <person name="Smith H.O."/>
            <person name="Fraser C.M."/>
            <person name="Moxon E.R."/>
            <person name="Rappuoli R."/>
            <person name="Venter J.C."/>
        </authorList>
    </citation>
    <scope>NUCLEOTIDE SEQUENCE [LARGE SCALE GENOMIC DNA]</scope>
    <source>
        <strain>ATCC BAA-335 / MC58</strain>
    </source>
</reference>
<reference key="2">
    <citation type="journal article" date="2005" name="Hum. Vaccin.">
        <title>Characterization of the protein content of a meningococcal outer membrane vesicle vaccine by polyacrylamide gel electrophoresis and mass spectrometry.</title>
        <authorList>
            <person name="Vipond C."/>
            <person name="Wheeler J.X."/>
            <person name="Jones C."/>
            <person name="Feavers I.M."/>
            <person name="Suker J."/>
        </authorList>
    </citation>
    <scope>IDENTIFICATION BY MASS SPECTROMETRY [LARGE SCALE ANALYSIS]</scope>
</reference>
<dbReference type="EMBL" id="AE002098">
    <property type="protein sequence ID" value="AAF42418.1"/>
    <property type="molecule type" value="Genomic_DNA"/>
</dbReference>
<dbReference type="PIR" id="F81006">
    <property type="entry name" value="F81006"/>
</dbReference>
<dbReference type="RefSeq" id="NP_275089.1">
    <property type="nucleotide sequence ID" value="NC_003112.2"/>
</dbReference>
<dbReference type="RefSeq" id="WP_002218221.1">
    <property type="nucleotide sequence ID" value="NC_003112.2"/>
</dbReference>
<dbReference type="SMR" id="P66540"/>
<dbReference type="FunCoup" id="P66540">
    <property type="interactions" value="656"/>
</dbReference>
<dbReference type="STRING" id="122586.NMB2101"/>
<dbReference type="PaxDb" id="122586-NMB2101"/>
<dbReference type="KEGG" id="nme:NMB2101"/>
<dbReference type="PATRIC" id="fig|122586.8.peg.2683"/>
<dbReference type="HOGENOM" id="CLU_040318_2_1_4"/>
<dbReference type="InParanoid" id="P66540"/>
<dbReference type="OrthoDB" id="9808036at2"/>
<dbReference type="Proteomes" id="UP000000425">
    <property type="component" value="Chromosome"/>
</dbReference>
<dbReference type="GO" id="GO:0022627">
    <property type="term" value="C:cytosolic small ribosomal subunit"/>
    <property type="evidence" value="ECO:0000318"/>
    <property type="project" value="GO_Central"/>
</dbReference>
<dbReference type="GO" id="GO:0003735">
    <property type="term" value="F:structural constituent of ribosome"/>
    <property type="evidence" value="ECO:0000318"/>
    <property type="project" value="GO_Central"/>
</dbReference>
<dbReference type="GO" id="GO:0006412">
    <property type="term" value="P:translation"/>
    <property type="evidence" value="ECO:0007669"/>
    <property type="project" value="UniProtKB-UniRule"/>
</dbReference>
<dbReference type="CDD" id="cd01425">
    <property type="entry name" value="RPS2"/>
    <property type="match status" value="1"/>
</dbReference>
<dbReference type="FunFam" id="1.10.287.610:FF:000004">
    <property type="entry name" value="30S ribosomal protein S2"/>
    <property type="match status" value="1"/>
</dbReference>
<dbReference type="Gene3D" id="3.40.50.10490">
    <property type="entry name" value="Glucose-6-phosphate isomerase like protein, domain 1"/>
    <property type="match status" value="1"/>
</dbReference>
<dbReference type="Gene3D" id="1.10.287.610">
    <property type="entry name" value="Helix hairpin bin"/>
    <property type="match status" value="1"/>
</dbReference>
<dbReference type="HAMAP" id="MF_00291_B">
    <property type="entry name" value="Ribosomal_uS2_B"/>
    <property type="match status" value="1"/>
</dbReference>
<dbReference type="InterPro" id="IPR001865">
    <property type="entry name" value="Ribosomal_uS2"/>
</dbReference>
<dbReference type="InterPro" id="IPR005706">
    <property type="entry name" value="Ribosomal_uS2_bac/mit/plastid"/>
</dbReference>
<dbReference type="InterPro" id="IPR018130">
    <property type="entry name" value="Ribosomal_uS2_CS"/>
</dbReference>
<dbReference type="InterPro" id="IPR023591">
    <property type="entry name" value="Ribosomal_uS2_flav_dom_sf"/>
</dbReference>
<dbReference type="NCBIfam" id="TIGR01011">
    <property type="entry name" value="rpsB_bact"/>
    <property type="match status" value="1"/>
</dbReference>
<dbReference type="PANTHER" id="PTHR12534">
    <property type="entry name" value="30S RIBOSOMAL PROTEIN S2 PROKARYOTIC AND ORGANELLAR"/>
    <property type="match status" value="1"/>
</dbReference>
<dbReference type="PANTHER" id="PTHR12534:SF0">
    <property type="entry name" value="SMALL RIBOSOMAL SUBUNIT PROTEIN US2M"/>
    <property type="match status" value="1"/>
</dbReference>
<dbReference type="Pfam" id="PF00318">
    <property type="entry name" value="Ribosomal_S2"/>
    <property type="match status" value="1"/>
</dbReference>
<dbReference type="PRINTS" id="PR00395">
    <property type="entry name" value="RIBOSOMALS2"/>
</dbReference>
<dbReference type="SUPFAM" id="SSF52313">
    <property type="entry name" value="Ribosomal protein S2"/>
    <property type="match status" value="1"/>
</dbReference>
<dbReference type="PROSITE" id="PS00962">
    <property type="entry name" value="RIBOSOMAL_S2_1"/>
    <property type="match status" value="1"/>
</dbReference>
<organism>
    <name type="scientific">Neisseria meningitidis serogroup B (strain ATCC BAA-335 / MC58)</name>
    <dbReference type="NCBI Taxonomy" id="122586"/>
    <lineage>
        <taxon>Bacteria</taxon>
        <taxon>Pseudomonadati</taxon>
        <taxon>Pseudomonadota</taxon>
        <taxon>Betaproteobacteria</taxon>
        <taxon>Neisseriales</taxon>
        <taxon>Neisseriaceae</taxon>
        <taxon>Neisseria</taxon>
    </lineage>
</organism>
<comment type="miscellaneous">
    <text>Present in outer membrane vesicle formulations which are used as vaccines in human.</text>
</comment>
<comment type="similarity">
    <text evidence="1">Belongs to the universal ribosomal protein uS2 family.</text>
</comment>
<keyword id="KW-1185">Reference proteome</keyword>
<keyword id="KW-0687">Ribonucleoprotein</keyword>
<keyword id="KW-0689">Ribosomal protein</keyword>
<sequence length="242" mass="26899">MSQITMRQMIEAGVHFGHQTRFWNPKMAQYIFGARNKIHIVNLEKTLPMFQDAQEAVRRLVANKGTVLFVGTKRQARDIIREEATRAGMPFVDYRWLGGMLTNYKTVKQSIKRLEEKTAALENAAESGFSKKEILEMQRDVEKLERSLGGIKNMKGLPDAIFVIDTGYQKGTLVEAEKLGIPVIAVVDTNNSPDGVKYVIPGNDDSAKAIRLYCRGIADAVLEGKNQALQETVAAAQEAAAE</sequence>
<name>RS2_NEIMB</name>
<gene>
    <name evidence="1" type="primary">rpsB</name>
    <name type="ordered locus">NMB2101</name>
</gene>